<proteinExistence type="inferred from homology"/>
<reference key="1">
    <citation type="submission" date="2006-12" db="EMBL/GenBank/DDBJ databases">
        <title>Complete sequence of Pyrobaculum islandicum DSM 4184.</title>
        <authorList>
            <person name="Copeland A."/>
            <person name="Lucas S."/>
            <person name="Lapidus A."/>
            <person name="Barry K."/>
            <person name="Detter J.C."/>
            <person name="Glavina del Rio T."/>
            <person name="Dalin E."/>
            <person name="Tice H."/>
            <person name="Pitluck S."/>
            <person name="Meincke L."/>
            <person name="Brettin T."/>
            <person name="Bruce D."/>
            <person name="Han C."/>
            <person name="Tapia R."/>
            <person name="Gilna P."/>
            <person name="Schmutz J."/>
            <person name="Larimer F."/>
            <person name="Land M."/>
            <person name="Hauser L."/>
            <person name="Kyrpides N."/>
            <person name="Mikhailova N."/>
            <person name="Cozen A.E."/>
            <person name="Fitz-Gibbon S.T."/>
            <person name="House C.H."/>
            <person name="Saltikov C."/>
            <person name="Lowe T."/>
            <person name="Richardson P."/>
        </authorList>
    </citation>
    <scope>NUCLEOTIDE SEQUENCE [LARGE SCALE GENOMIC DNA]</scope>
    <source>
        <strain>DSM 4184 / JCM 9189 / GEO3</strain>
    </source>
</reference>
<evidence type="ECO:0000255" key="1">
    <source>
        <dbReference type="HAMAP-Rule" id="MF_00127"/>
    </source>
</evidence>
<gene>
    <name evidence="1" type="primary">hisS</name>
    <name type="ordered locus">Pisl_1621</name>
</gene>
<name>SYH_PYRIL</name>
<dbReference type="EC" id="6.1.1.21" evidence="1"/>
<dbReference type="EMBL" id="CP000504">
    <property type="protein sequence ID" value="ABL88774.1"/>
    <property type="molecule type" value="Genomic_DNA"/>
</dbReference>
<dbReference type="RefSeq" id="WP_011763349.1">
    <property type="nucleotide sequence ID" value="NC_008701.1"/>
</dbReference>
<dbReference type="SMR" id="A1RUZ2"/>
<dbReference type="STRING" id="384616.Pisl_1621"/>
<dbReference type="GeneID" id="4617969"/>
<dbReference type="KEGG" id="pis:Pisl_1621"/>
<dbReference type="eggNOG" id="arCOG00404">
    <property type="taxonomic scope" value="Archaea"/>
</dbReference>
<dbReference type="HOGENOM" id="CLU_025113_3_0_2"/>
<dbReference type="OrthoDB" id="8659at2157"/>
<dbReference type="Proteomes" id="UP000002595">
    <property type="component" value="Chromosome"/>
</dbReference>
<dbReference type="GO" id="GO:0005737">
    <property type="term" value="C:cytoplasm"/>
    <property type="evidence" value="ECO:0007669"/>
    <property type="project" value="UniProtKB-SubCell"/>
</dbReference>
<dbReference type="GO" id="GO:0005524">
    <property type="term" value="F:ATP binding"/>
    <property type="evidence" value="ECO:0007669"/>
    <property type="project" value="UniProtKB-UniRule"/>
</dbReference>
<dbReference type="GO" id="GO:0004821">
    <property type="term" value="F:histidine-tRNA ligase activity"/>
    <property type="evidence" value="ECO:0007669"/>
    <property type="project" value="UniProtKB-UniRule"/>
</dbReference>
<dbReference type="GO" id="GO:0006427">
    <property type="term" value="P:histidyl-tRNA aminoacylation"/>
    <property type="evidence" value="ECO:0007669"/>
    <property type="project" value="UniProtKB-UniRule"/>
</dbReference>
<dbReference type="GO" id="GO:0000105">
    <property type="term" value="P:L-histidine biosynthetic process"/>
    <property type="evidence" value="ECO:0007669"/>
    <property type="project" value="InterPro"/>
</dbReference>
<dbReference type="CDD" id="cd00773">
    <property type="entry name" value="HisRS-like_core"/>
    <property type="match status" value="1"/>
</dbReference>
<dbReference type="Gene3D" id="3.40.50.800">
    <property type="entry name" value="Anticodon-binding domain"/>
    <property type="match status" value="1"/>
</dbReference>
<dbReference type="Gene3D" id="3.30.930.10">
    <property type="entry name" value="Bira Bifunctional Protein, Domain 2"/>
    <property type="match status" value="1"/>
</dbReference>
<dbReference type="HAMAP" id="MF_00127">
    <property type="entry name" value="His_tRNA_synth"/>
    <property type="match status" value="1"/>
</dbReference>
<dbReference type="HAMAP" id="MF_00125">
    <property type="entry name" value="HisZ"/>
    <property type="match status" value="1"/>
</dbReference>
<dbReference type="InterPro" id="IPR006195">
    <property type="entry name" value="aa-tRNA-synth_II"/>
</dbReference>
<dbReference type="InterPro" id="IPR045864">
    <property type="entry name" value="aa-tRNA-synth_II/BPL/LPL"/>
</dbReference>
<dbReference type="InterPro" id="IPR004154">
    <property type="entry name" value="Anticodon-bd"/>
</dbReference>
<dbReference type="InterPro" id="IPR036621">
    <property type="entry name" value="Anticodon-bd_dom_sf"/>
</dbReference>
<dbReference type="InterPro" id="IPR015807">
    <property type="entry name" value="His-tRNA-ligase"/>
</dbReference>
<dbReference type="InterPro" id="IPR041715">
    <property type="entry name" value="HisRS-like_core"/>
</dbReference>
<dbReference type="InterPro" id="IPR004516">
    <property type="entry name" value="HisRS/HisZ"/>
</dbReference>
<dbReference type="InterPro" id="IPR004517">
    <property type="entry name" value="HisZ"/>
</dbReference>
<dbReference type="NCBIfam" id="TIGR00442">
    <property type="entry name" value="hisS"/>
    <property type="match status" value="1"/>
</dbReference>
<dbReference type="PANTHER" id="PTHR43707:SF1">
    <property type="entry name" value="HISTIDINE--TRNA LIGASE, MITOCHONDRIAL-RELATED"/>
    <property type="match status" value="1"/>
</dbReference>
<dbReference type="PANTHER" id="PTHR43707">
    <property type="entry name" value="HISTIDYL-TRNA SYNTHETASE"/>
    <property type="match status" value="1"/>
</dbReference>
<dbReference type="Pfam" id="PF03129">
    <property type="entry name" value="HGTP_anticodon"/>
    <property type="match status" value="1"/>
</dbReference>
<dbReference type="Pfam" id="PF13393">
    <property type="entry name" value="tRNA-synt_His"/>
    <property type="match status" value="1"/>
</dbReference>
<dbReference type="PIRSF" id="PIRSF001549">
    <property type="entry name" value="His-tRNA_synth"/>
    <property type="match status" value="1"/>
</dbReference>
<dbReference type="SUPFAM" id="SSF52954">
    <property type="entry name" value="Class II aaRS ABD-related"/>
    <property type="match status" value="1"/>
</dbReference>
<dbReference type="SUPFAM" id="SSF55681">
    <property type="entry name" value="Class II aaRS and biotin synthetases"/>
    <property type="match status" value="1"/>
</dbReference>
<dbReference type="PROSITE" id="PS50862">
    <property type="entry name" value="AA_TRNA_LIGASE_II"/>
    <property type="match status" value="1"/>
</dbReference>
<comment type="catalytic activity">
    <reaction evidence="1">
        <text>tRNA(His) + L-histidine + ATP = L-histidyl-tRNA(His) + AMP + diphosphate + H(+)</text>
        <dbReference type="Rhea" id="RHEA:17313"/>
        <dbReference type="Rhea" id="RHEA-COMP:9665"/>
        <dbReference type="Rhea" id="RHEA-COMP:9689"/>
        <dbReference type="ChEBI" id="CHEBI:15378"/>
        <dbReference type="ChEBI" id="CHEBI:30616"/>
        <dbReference type="ChEBI" id="CHEBI:33019"/>
        <dbReference type="ChEBI" id="CHEBI:57595"/>
        <dbReference type="ChEBI" id="CHEBI:78442"/>
        <dbReference type="ChEBI" id="CHEBI:78527"/>
        <dbReference type="ChEBI" id="CHEBI:456215"/>
        <dbReference type="EC" id="6.1.1.21"/>
    </reaction>
</comment>
<comment type="subcellular location">
    <subcellularLocation>
        <location evidence="1">Cytoplasm</location>
    </subcellularLocation>
</comment>
<comment type="similarity">
    <text evidence="1">Belongs to the class-II aminoacyl-tRNA synthetase family.</text>
</comment>
<organism>
    <name type="scientific">Pyrobaculum islandicum (strain DSM 4184 / JCM 9189 / GEO3)</name>
    <dbReference type="NCBI Taxonomy" id="384616"/>
    <lineage>
        <taxon>Archaea</taxon>
        <taxon>Thermoproteota</taxon>
        <taxon>Thermoprotei</taxon>
        <taxon>Thermoproteales</taxon>
        <taxon>Thermoproteaceae</taxon>
        <taxon>Pyrobaculum</taxon>
    </lineage>
</organism>
<sequence>MSGLPDYLRRPPRGMRDWLPPQFYALRHMEETLSKVAEAFGYRRVETPVVEHFEVLAKKAGQEVVNEIYYFKDKAGRDLGLRFDMTVPIARVISYNLSLPRPIRWYYFTKVFRYDEPQHGRYREFYQFGIELIGSASPRADAEVLQVFTQALDAVGARSYIVKINDRRVVDKLLERLGVSAYRDVIYRALDKKLKLSREEVIKLMAEGGVSLDTAERIYDIAEEMSIEEAVNVITKLDSGLGSFYNKLLKYLEAAVSLDKFRFDMSIVRGLDYYTGMVFEAFAGEYKLAVGGGGRYDDLLELYSGVKMPALGFAIGVERLMEAVGLEGVEKPLDYYIYIFDDDAYPYAVAIAKRLRSAGYSVVVELGEKNLKEVFEYILKIGTRYLIIIGKKELEKGVVKIRDLQRREEFEKPFSEFYGTT</sequence>
<keyword id="KW-0030">Aminoacyl-tRNA synthetase</keyword>
<keyword id="KW-0067">ATP-binding</keyword>
<keyword id="KW-0963">Cytoplasm</keyword>
<keyword id="KW-0436">Ligase</keyword>
<keyword id="KW-0547">Nucleotide-binding</keyword>
<keyword id="KW-0648">Protein biosynthesis</keyword>
<protein>
    <recommendedName>
        <fullName evidence="1">Histidine--tRNA ligase</fullName>
        <ecNumber evidence="1">6.1.1.21</ecNumber>
    </recommendedName>
    <alternativeName>
        <fullName evidence="1">Histidyl-tRNA synthetase</fullName>
        <shortName evidence="1">HisRS</shortName>
    </alternativeName>
</protein>
<feature type="chain" id="PRO_1000016428" description="Histidine--tRNA ligase">
    <location>
        <begin position="1"/>
        <end position="421"/>
    </location>
</feature>
<accession>A1RUZ2</accession>